<feature type="chain" id="PRO_1000018351" description="Tryptophan synthase beta chain">
    <location>
        <begin position="1"/>
        <end position="401"/>
    </location>
</feature>
<feature type="modified residue" description="N6-(pyridoxal phosphate)lysine" evidence="1">
    <location>
        <position position="91"/>
    </location>
</feature>
<comment type="function">
    <text evidence="1">The beta subunit is responsible for the synthesis of L-tryptophan from indole and L-serine.</text>
</comment>
<comment type="catalytic activity">
    <reaction evidence="1">
        <text>(1S,2R)-1-C-(indol-3-yl)glycerol 3-phosphate + L-serine = D-glyceraldehyde 3-phosphate + L-tryptophan + H2O</text>
        <dbReference type="Rhea" id="RHEA:10532"/>
        <dbReference type="ChEBI" id="CHEBI:15377"/>
        <dbReference type="ChEBI" id="CHEBI:33384"/>
        <dbReference type="ChEBI" id="CHEBI:57912"/>
        <dbReference type="ChEBI" id="CHEBI:58866"/>
        <dbReference type="ChEBI" id="CHEBI:59776"/>
        <dbReference type="EC" id="4.2.1.20"/>
    </reaction>
</comment>
<comment type="cofactor">
    <cofactor evidence="1">
        <name>pyridoxal 5'-phosphate</name>
        <dbReference type="ChEBI" id="CHEBI:597326"/>
    </cofactor>
</comment>
<comment type="pathway">
    <text evidence="1">Amino-acid biosynthesis; L-tryptophan biosynthesis; L-tryptophan from chorismate: step 5/5.</text>
</comment>
<comment type="subunit">
    <text evidence="1">Tetramer of two alpha and two beta chains.</text>
</comment>
<comment type="similarity">
    <text evidence="1">Belongs to the TrpB family.</text>
</comment>
<keyword id="KW-0028">Amino-acid biosynthesis</keyword>
<keyword id="KW-0057">Aromatic amino acid biosynthesis</keyword>
<keyword id="KW-0456">Lyase</keyword>
<keyword id="KW-0663">Pyridoxal phosphate</keyword>
<keyword id="KW-0822">Tryptophan biosynthesis</keyword>
<gene>
    <name evidence="1" type="primary">trpB</name>
    <name type="ordered locus">llmg_1041</name>
</gene>
<evidence type="ECO:0000255" key="1">
    <source>
        <dbReference type="HAMAP-Rule" id="MF_00133"/>
    </source>
</evidence>
<sequence>MTYNQPNNQGFYGQFGGQFVPETLMTAVKELEVAYEDSKKDPVFQAELKELLKDYVGRENPLYFAKRLTEYAGGAKIYLKREDLNHTGAHKINNALGQVLLAKKMGKNKVIAETGAGQHGVATATAAALFGMECTIYMGEEDVKRQSLNVFRMELLGAKVHSVTDGSRVLKDAVNAALRAWVAQVEDTHYVMGSVLGPHPFPQIVRDYQAIIGQEARAQFLEKENKLPDALVACVGGGSNSMGLFYPFVNDESVEMYGVEAAGLGIDTPHHAATITKGRPGVLHGTLMDVLQDENGQILEAFSISAGLDYPGIGPEHSYFNAVGRAKYVDITDEEALEGFKILSRTEGIIPALESSHAIAYAVKLAKELGSEKTMIVCLSGRGDKDVVQVKERLEAEKEVK</sequence>
<reference key="1">
    <citation type="journal article" date="2007" name="J. Bacteriol.">
        <title>The complete genome sequence of the lactic acid bacterial paradigm Lactococcus lactis subsp. cremoris MG1363.</title>
        <authorList>
            <person name="Wegmann U."/>
            <person name="O'Connell-Motherway M."/>
            <person name="Zomer A."/>
            <person name="Buist G."/>
            <person name="Shearman C."/>
            <person name="Canchaya C."/>
            <person name="Ventura M."/>
            <person name="Goesmann A."/>
            <person name="Gasson M.J."/>
            <person name="Kuipers O.P."/>
            <person name="van Sinderen D."/>
            <person name="Kok J."/>
        </authorList>
    </citation>
    <scope>NUCLEOTIDE SEQUENCE [LARGE SCALE GENOMIC DNA]</scope>
    <source>
        <strain>MG1363</strain>
    </source>
</reference>
<organism>
    <name type="scientific">Lactococcus lactis subsp. cremoris (strain MG1363)</name>
    <dbReference type="NCBI Taxonomy" id="416870"/>
    <lineage>
        <taxon>Bacteria</taxon>
        <taxon>Bacillati</taxon>
        <taxon>Bacillota</taxon>
        <taxon>Bacilli</taxon>
        <taxon>Lactobacillales</taxon>
        <taxon>Streptococcaceae</taxon>
        <taxon>Lactococcus</taxon>
        <taxon>Lactococcus cremoris subsp. cremoris</taxon>
    </lineage>
</organism>
<accession>A2RK24</accession>
<name>TRPB_LACLM</name>
<protein>
    <recommendedName>
        <fullName evidence="1">Tryptophan synthase beta chain</fullName>
        <ecNumber evidence="1">4.2.1.20</ecNumber>
    </recommendedName>
</protein>
<proteinExistence type="inferred from homology"/>
<dbReference type="EC" id="4.2.1.20" evidence="1"/>
<dbReference type="EMBL" id="AM406671">
    <property type="protein sequence ID" value="CAL97633.1"/>
    <property type="molecule type" value="Genomic_DNA"/>
</dbReference>
<dbReference type="RefSeq" id="WP_011834965.1">
    <property type="nucleotide sequence ID" value="NC_009004.1"/>
</dbReference>
<dbReference type="SMR" id="A2RK24"/>
<dbReference type="STRING" id="416870.llmg_1041"/>
<dbReference type="KEGG" id="llm:llmg_1041"/>
<dbReference type="eggNOG" id="COG0133">
    <property type="taxonomic scope" value="Bacteria"/>
</dbReference>
<dbReference type="HOGENOM" id="CLU_016734_3_1_9"/>
<dbReference type="OrthoDB" id="9766131at2"/>
<dbReference type="PhylomeDB" id="A2RK24"/>
<dbReference type="UniPathway" id="UPA00035">
    <property type="reaction ID" value="UER00044"/>
</dbReference>
<dbReference type="Proteomes" id="UP000000364">
    <property type="component" value="Chromosome"/>
</dbReference>
<dbReference type="GO" id="GO:0005737">
    <property type="term" value="C:cytoplasm"/>
    <property type="evidence" value="ECO:0007669"/>
    <property type="project" value="TreeGrafter"/>
</dbReference>
<dbReference type="GO" id="GO:0004834">
    <property type="term" value="F:tryptophan synthase activity"/>
    <property type="evidence" value="ECO:0007669"/>
    <property type="project" value="UniProtKB-UniRule"/>
</dbReference>
<dbReference type="CDD" id="cd06446">
    <property type="entry name" value="Trp-synth_B"/>
    <property type="match status" value="1"/>
</dbReference>
<dbReference type="FunFam" id="3.40.50.1100:FF:000001">
    <property type="entry name" value="Tryptophan synthase beta chain"/>
    <property type="match status" value="1"/>
</dbReference>
<dbReference type="FunFam" id="3.40.50.1100:FF:000004">
    <property type="entry name" value="Tryptophan synthase beta chain"/>
    <property type="match status" value="1"/>
</dbReference>
<dbReference type="Gene3D" id="3.40.50.1100">
    <property type="match status" value="2"/>
</dbReference>
<dbReference type="HAMAP" id="MF_00133">
    <property type="entry name" value="Trp_synth_beta"/>
    <property type="match status" value="1"/>
</dbReference>
<dbReference type="InterPro" id="IPR006653">
    <property type="entry name" value="Trp_synth_b_CS"/>
</dbReference>
<dbReference type="InterPro" id="IPR006654">
    <property type="entry name" value="Trp_synth_beta"/>
</dbReference>
<dbReference type="InterPro" id="IPR023026">
    <property type="entry name" value="Trp_synth_beta/beta-like"/>
</dbReference>
<dbReference type="InterPro" id="IPR001926">
    <property type="entry name" value="TrpB-like_PALP"/>
</dbReference>
<dbReference type="InterPro" id="IPR036052">
    <property type="entry name" value="TrpB-like_PALP_sf"/>
</dbReference>
<dbReference type="NCBIfam" id="TIGR00263">
    <property type="entry name" value="trpB"/>
    <property type="match status" value="1"/>
</dbReference>
<dbReference type="PANTHER" id="PTHR48077:SF3">
    <property type="entry name" value="TRYPTOPHAN SYNTHASE"/>
    <property type="match status" value="1"/>
</dbReference>
<dbReference type="PANTHER" id="PTHR48077">
    <property type="entry name" value="TRYPTOPHAN SYNTHASE-RELATED"/>
    <property type="match status" value="1"/>
</dbReference>
<dbReference type="Pfam" id="PF00291">
    <property type="entry name" value="PALP"/>
    <property type="match status" value="1"/>
</dbReference>
<dbReference type="PIRSF" id="PIRSF001413">
    <property type="entry name" value="Trp_syn_beta"/>
    <property type="match status" value="1"/>
</dbReference>
<dbReference type="SUPFAM" id="SSF53686">
    <property type="entry name" value="Tryptophan synthase beta subunit-like PLP-dependent enzymes"/>
    <property type="match status" value="1"/>
</dbReference>
<dbReference type="PROSITE" id="PS00168">
    <property type="entry name" value="TRP_SYNTHASE_BETA"/>
    <property type="match status" value="1"/>
</dbReference>